<protein>
    <recommendedName>
        <fullName>NADH-ubiquinone oxidoreductase chain 3</fullName>
        <ecNumber>7.1.1.2</ecNumber>
    </recommendedName>
    <alternativeName>
        <fullName>NADH dehydrogenase subunit 3</fullName>
    </alternativeName>
</protein>
<gene>
    <name type="primary">MT-ND3</name>
    <name type="synonym">MTND3</name>
    <name type="synonym">NADH3</name>
    <name type="synonym">ND3</name>
</gene>
<reference key="1">
    <citation type="journal article" date="1989" name="J. Mol. Evol.">
        <title>Variation in salmonid mitochondrial DNA: evolutionary constraints and mechanisms of substitution.</title>
        <authorList>
            <person name="Thomas W.K."/>
            <person name="Beckenbach A.T."/>
        </authorList>
    </citation>
    <scope>NUCLEOTIDE SEQUENCE [GENOMIC DNA]</scope>
</reference>
<reference key="2">
    <citation type="journal article" date="1995" name="J. Mol. Evol.">
        <title>The complete nucleotide sequence of the mitochondrial DNA genome of the rainbow trout, Oncorhynchus mykiss.</title>
        <authorList>
            <person name="Zardoya R."/>
            <person name="Garrido-Pertierra A."/>
            <person name="Bautista J.M."/>
        </authorList>
    </citation>
    <scope>NUCLEOTIDE SEQUENCE [GENOMIC DNA]</scope>
    <source>
        <tissue>Liver</tissue>
    </source>
</reference>
<reference key="3">
    <citation type="journal article" date="1988" name="Curr. Genet.">
        <title>Cloning and sequence analysis of an XbaI fragment of rainbow trout mitochondrial DNA.</title>
        <authorList>
            <person name="Davidson W.S."/>
            <person name="Bartlett S.E."/>
            <person name="Birt T.P."/>
            <person name="Green J.M."/>
        </authorList>
    </citation>
    <scope>NUCLEOTIDE SEQUENCE [GENOMIC DNA] OF 68-116</scope>
    <source>
        <tissue>Liver</tissue>
    </source>
</reference>
<sequence length="116" mass="12931">MNLITTIITITITLSAVLATISFWLPQISPDAEKLSPYECGFDPLGSARLPFSLRFFLIAILFLLFDLEIALLLPLPWGDQLHTPTLTLIWSTAVLALLTLGLIYEWTQGGLEWAE</sequence>
<geneLocation type="mitochondrion"/>
<accession>P11629</accession>
<organism>
    <name type="scientific">Oncorhynchus mykiss</name>
    <name type="common">Rainbow trout</name>
    <name type="synonym">Salmo gairdneri</name>
    <dbReference type="NCBI Taxonomy" id="8022"/>
    <lineage>
        <taxon>Eukaryota</taxon>
        <taxon>Metazoa</taxon>
        <taxon>Chordata</taxon>
        <taxon>Craniata</taxon>
        <taxon>Vertebrata</taxon>
        <taxon>Euteleostomi</taxon>
        <taxon>Actinopterygii</taxon>
        <taxon>Neopterygii</taxon>
        <taxon>Teleostei</taxon>
        <taxon>Protacanthopterygii</taxon>
        <taxon>Salmoniformes</taxon>
        <taxon>Salmonidae</taxon>
        <taxon>Salmoninae</taxon>
        <taxon>Oncorhynchus</taxon>
    </lineage>
</organism>
<dbReference type="EC" id="7.1.1.2"/>
<dbReference type="EMBL" id="L29771">
    <property type="protein sequence ID" value="AAB03354.1"/>
    <property type="molecule type" value="Genomic_DNA"/>
</dbReference>
<dbReference type="EMBL" id="X14013">
    <property type="protein sequence ID" value="CAA32178.1"/>
    <property type="molecule type" value="Genomic_DNA"/>
</dbReference>
<dbReference type="PIR" id="E30396">
    <property type="entry name" value="E30396"/>
</dbReference>
<dbReference type="RefSeq" id="NP_008297.1">
    <property type="nucleotide sequence ID" value="NC_001717.1"/>
</dbReference>
<dbReference type="SMR" id="P11629"/>
<dbReference type="GeneID" id="807972"/>
<dbReference type="KEGG" id="omy:807972"/>
<dbReference type="CTD" id="4537"/>
<dbReference type="OrthoDB" id="154075at2759"/>
<dbReference type="Proteomes" id="UP000694395">
    <property type="component" value="Unplaced"/>
</dbReference>
<dbReference type="GO" id="GO:0031966">
    <property type="term" value="C:mitochondrial membrane"/>
    <property type="evidence" value="ECO:0007669"/>
    <property type="project" value="UniProtKB-SubCell"/>
</dbReference>
<dbReference type="GO" id="GO:0030964">
    <property type="term" value="C:NADH dehydrogenase complex"/>
    <property type="evidence" value="ECO:0007669"/>
    <property type="project" value="TreeGrafter"/>
</dbReference>
<dbReference type="GO" id="GO:0008137">
    <property type="term" value="F:NADH dehydrogenase (ubiquinone) activity"/>
    <property type="evidence" value="ECO:0007669"/>
    <property type="project" value="UniProtKB-EC"/>
</dbReference>
<dbReference type="FunFam" id="1.20.58.1610:FF:000004">
    <property type="entry name" value="NADH-quinone oxidoreductase subunit A"/>
    <property type="match status" value="1"/>
</dbReference>
<dbReference type="Gene3D" id="1.20.58.1610">
    <property type="entry name" value="NADH:ubiquinone/plastoquinone oxidoreductase, chain 3"/>
    <property type="match status" value="1"/>
</dbReference>
<dbReference type="InterPro" id="IPR000440">
    <property type="entry name" value="NADH_UbQ/plastoQ_OxRdtase_su3"/>
</dbReference>
<dbReference type="InterPro" id="IPR038430">
    <property type="entry name" value="NDAH_ubi_oxred_su3_sf"/>
</dbReference>
<dbReference type="PANTHER" id="PTHR11058">
    <property type="entry name" value="NADH-UBIQUINONE OXIDOREDUCTASE CHAIN 3"/>
    <property type="match status" value="1"/>
</dbReference>
<dbReference type="PANTHER" id="PTHR11058:SF9">
    <property type="entry name" value="NADH-UBIQUINONE OXIDOREDUCTASE CHAIN 3"/>
    <property type="match status" value="1"/>
</dbReference>
<dbReference type="Pfam" id="PF00507">
    <property type="entry name" value="Oxidored_q4"/>
    <property type="match status" value="1"/>
</dbReference>
<comment type="function">
    <text evidence="1">Core subunit of the mitochondrial membrane respiratory chain NADH dehydrogenase (Complex I) that is believed to belong to the minimal assembly required for catalysis. Complex I functions in the transfer of electrons from NADH to the respiratory chain. The immediate electron acceptor for the enzyme is believed to be ubiquinone (By similarity).</text>
</comment>
<comment type="catalytic activity">
    <reaction>
        <text>a ubiquinone + NADH + 5 H(+)(in) = a ubiquinol + NAD(+) + 4 H(+)(out)</text>
        <dbReference type="Rhea" id="RHEA:29091"/>
        <dbReference type="Rhea" id="RHEA-COMP:9565"/>
        <dbReference type="Rhea" id="RHEA-COMP:9566"/>
        <dbReference type="ChEBI" id="CHEBI:15378"/>
        <dbReference type="ChEBI" id="CHEBI:16389"/>
        <dbReference type="ChEBI" id="CHEBI:17976"/>
        <dbReference type="ChEBI" id="CHEBI:57540"/>
        <dbReference type="ChEBI" id="CHEBI:57945"/>
        <dbReference type="EC" id="7.1.1.2"/>
    </reaction>
</comment>
<comment type="subcellular location">
    <subcellularLocation>
        <location evidence="1">Mitochondrion membrane</location>
        <topology evidence="1">Multi-pass membrane protein</topology>
    </subcellularLocation>
</comment>
<comment type="similarity">
    <text evidence="3">Belongs to the complex I subunit 3 family.</text>
</comment>
<name>NU3M_ONCMY</name>
<keyword id="KW-0249">Electron transport</keyword>
<keyword id="KW-0472">Membrane</keyword>
<keyword id="KW-0496">Mitochondrion</keyword>
<keyword id="KW-0520">NAD</keyword>
<keyword id="KW-0679">Respiratory chain</keyword>
<keyword id="KW-1278">Translocase</keyword>
<keyword id="KW-0812">Transmembrane</keyword>
<keyword id="KW-1133">Transmembrane helix</keyword>
<keyword id="KW-0813">Transport</keyword>
<keyword id="KW-0830">Ubiquinone</keyword>
<feature type="chain" id="PRO_0000117779" description="NADH-ubiquinone oxidoreductase chain 3">
    <location>
        <begin position="1"/>
        <end position="116"/>
    </location>
</feature>
<feature type="transmembrane region" description="Helical" evidence="2">
    <location>
        <begin position="3"/>
        <end position="23"/>
    </location>
</feature>
<feature type="transmembrane region" description="Helical" evidence="2">
    <location>
        <begin position="56"/>
        <end position="76"/>
    </location>
</feature>
<feature type="transmembrane region" description="Helical" evidence="2">
    <location>
        <begin position="87"/>
        <end position="107"/>
    </location>
</feature>
<feature type="sequence conflict" description="In Ref. 3; CAA32178." evidence="3" ref="3">
    <original>L</original>
    <variation>F</variation>
    <location>
        <position position="74"/>
    </location>
</feature>
<feature type="sequence conflict" description="In Ref. 3; CAA32178." evidence="3" ref="3">
    <original>D</original>
    <variation>V</variation>
    <location>
        <position position="80"/>
    </location>
</feature>
<proteinExistence type="inferred from homology"/>
<evidence type="ECO:0000250" key="1"/>
<evidence type="ECO:0000255" key="2"/>
<evidence type="ECO:0000305" key="3"/>